<gene>
    <name type="primary">argA</name>
    <name type="ordered locus">VC_2316</name>
</gene>
<protein>
    <recommendedName>
        <fullName>Amino-acid acetyltransferase</fullName>
        <ecNumber>2.3.1.1</ecNumber>
    </recommendedName>
    <alternativeName>
        <fullName>N-acetylglutamate synthase</fullName>
        <shortName>AGS</shortName>
        <shortName>NAGS</shortName>
    </alternativeName>
</protein>
<comment type="catalytic activity">
    <reaction>
        <text>L-glutamate + acetyl-CoA = N-acetyl-L-glutamate + CoA + H(+)</text>
        <dbReference type="Rhea" id="RHEA:24292"/>
        <dbReference type="ChEBI" id="CHEBI:15378"/>
        <dbReference type="ChEBI" id="CHEBI:29985"/>
        <dbReference type="ChEBI" id="CHEBI:44337"/>
        <dbReference type="ChEBI" id="CHEBI:57287"/>
        <dbReference type="ChEBI" id="CHEBI:57288"/>
        <dbReference type="EC" id="2.3.1.1"/>
    </reaction>
</comment>
<comment type="pathway">
    <text>Amino-acid biosynthesis; L-arginine biosynthesis; N(2)-acetyl-L-ornithine from L-glutamate: step 1/4.</text>
</comment>
<comment type="subcellular location">
    <subcellularLocation>
        <location evidence="1">Cytoplasm</location>
    </subcellularLocation>
</comment>
<comment type="similarity">
    <text evidence="2">Belongs to the acetyltransferase family. ArgA subfamily.</text>
</comment>
<comment type="sequence caution" evidence="2">
    <conflict type="erroneous initiation">
        <sequence resource="EMBL-CDS" id="AAF95460"/>
    </conflict>
</comment>
<keyword id="KW-0012">Acyltransferase</keyword>
<keyword id="KW-0028">Amino-acid biosynthesis</keyword>
<keyword id="KW-0055">Arginine biosynthesis</keyword>
<keyword id="KW-0963">Cytoplasm</keyword>
<keyword id="KW-1185">Reference proteome</keyword>
<keyword id="KW-0808">Transferase</keyword>
<organism>
    <name type="scientific">Vibrio cholerae serotype O1 (strain ATCC 39315 / El Tor Inaba N16961)</name>
    <dbReference type="NCBI Taxonomy" id="243277"/>
    <lineage>
        <taxon>Bacteria</taxon>
        <taxon>Pseudomonadati</taxon>
        <taxon>Pseudomonadota</taxon>
        <taxon>Gammaproteobacteria</taxon>
        <taxon>Vibrionales</taxon>
        <taxon>Vibrionaceae</taxon>
        <taxon>Vibrio</taxon>
    </lineage>
</organism>
<feature type="chain" id="PRO_0000186808" description="Amino-acid acetyltransferase">
    <location>
        <begin position="1"/>
        <end position="445"/>
    </location>
</feature>
<feature type="domain" description="N-acetyltransferase">
    <location>
        <begin position="299"/>
        <end position="445"/>
    </location>
</feature>
<accession>Q9KPQ0</accession>
<evidence type="ECO:0000250" key="1"/>
<evidence type="ECO:0000305" key="2"/>
<reference key="1">
    <citation type="journal article" date="2000" name="Nature">
        <title>DNA sequence of both chromosomes of the cholera pathogen Vibrio cholerae.</title>
        <authorList>
            <person name="Heidelberg J.F."/>
            <person name="Eisen J.A."/>
            <person name="Nelson W.C."/>
            <person name="Clayton R.A."/>
            <person name="Gwinn M.L."/>
            <person name="Dodson R.J."/>
            <person name="Haft D.H."/>
            <person name="Hickey E.K."/>
            <person name="Peterson J.D."/>
            <person name="Umayam L.A."/>
            <person name="Gill S.R."/>
            <person name="Nelson K.E."/>
            <person name="Read T.D."/>
            <person name="Tettelin H."/>
            <person name="Richardson D.L."/>
            <person name="Ermolaeva M.D."/>
            <person name="Vamathevan J.J."/>
            <person name="Bass S."/>
            <person name="Qin H."/>
            <person name="Dragoi I."/>
            <person name="Sellers P."/>
            <person name="McDonald L.A."/>
            <person name="Utterback T.R."/>
            <person name="Fleischmann R.D."/>
            <person name="Nierman W.C."/>
            <person name="White O."/>
            <person name="Salzberg S.L."/>
            <person name="Smith H.O."/>
            <person name="Colwell R.R."/>
            <person name="Mekalanos J.J."/>
            <person name="Venter J.C."/>
            <person name="Fraser C.M."/>
        </authorList>
    </citation>
    <scope>NUCLEOTIDE SEQUENCE [LARGE SCALE GENOMIC DNA]</scope>
    <source>
        <strain>ATCC 39315 / El Tor Inaba N16961</strain>
    </source>
</reference>
<sequence length="445" mass="49443">MKIRSTALVKGFRQSAPYVNAHRGKTMVVMLGGEAIADKNFPNIISDIALLHSLGVKVVLVHGARPQINQILEKNQRDTPYHKGVRITDESSLGLVMQAAGQLQHAITARLSMSLNNTPMAGTQLNVVSGNFIISQPLGIDEGVDYCHSGRIRRIDVEGINRMLDLGSIVLLGPIASSVTGECFNLLSEEVATQVAIKLKADKLIGFCPQQGIIDTKGNAIAELFPSDVERLVKSMEQECAPDDEECFSTMRFLRAALKACRAGVPRSHLVSYKEDGALIQELFSFDGIGTQIVMASAEQIRQATIDDIGGIFDLIRPLEEQGILVRRSREQLEQEIHKFTIIDKDGLVIGCSALYPYPEERMAEMACVAIHPEYRDGHRGLHLLVHSKHQAKQMGIRHLFVLTTHSTHWFREQGFNEVDVEALPMAKKSLYNYQRRSKILMLQL</sequence>
<proteinExistence type="inferred from homology"/>
<dbReference type="EC" id="2.3.1.1"/>
<dbReference type="EMBL" id="AE003852">
    <property type="protein sequence ID" value="AAF95460.1"/>
    <property type="status" value="ALT_INIT"/>
    <property type="molecule type" value="Genomic_DNA"/>
</dbReference>
<dbReference type="PIR" id="E82093">
    <property type="entry name" value="E82093"/>
</dbReference>
<dbReference type="RefSeq" id="NP_231947.1">
    <property type="nucleotide sequence ID" value="NC_002505.1"/>
</dbReference>
<dbReference type="SMR" id="Q9KPQ0"/>
<dbReference type="STRING" id="243277.VC_2316"/>
<dbReference type="DNASU" id="2613112"/>
<dbReference type="EnsemblBacteria" id="AAF95460">
    <property type="protein sequence ID" value="AAF95460"/>
    <property type="gene ID" value="VC_2316"/>
</dbReference>
<dbReference type="KEGG" id="vch:VC_2316"/>
<dbReference type="PATRIC" id="fig|243277.26.peg.2207"/>
<dbReference type="eggNOG" id="COG0548">
    <property type="taxonomic scope" value="Bacteria"/>
</dbReference>
<dbReference type="eggNOG" id="COG1246">
    <property type="taxonomic scope" value="Bacteria"/>
</dbReference>
<dbReference type="HOGENOM" id="CLU_024773_0_0_6"/>
<dbReference type="UniPathway" id="UPA00068">
    <property type="reaction ID" value="UER00106"/>
</dbReference>
<dbReference type="Proteomes" id="UP000000584">
    <property type="component" value="Chromosome 1"/>
</dbReference>
<dbReference type="GO" id="GO:0005737">
    <property type="term" value="C:cytoplasm"/>
    <property type="evidence" value="ECO:0007669"/>
    <property type="project" value="UniProtKB-SubCell"/>
</dbReference>
<dbReference type="GO" id="GO:0004042">
    <property type="term" value="F:L-glutamate N-acetyltransferase activity"/>
    <property type="evidence" value="ECO:0007669"/>
    <property type="project" value="UniProtKB-UniRule"/>
</dbReference>
<dbReference type="GO" id="GO:0006526">
    <property type="term" value="P:L-arginine biosynthetic process"/>
    <property type="evidence" value="ECO:0007669"/>
    <property type="project" value="UniProtKB-UniRule"/>
</dbReference>
<dbReference type="CDD" id="cd04237">
    <property type="entry name" value="AAK_NAGS-ABP"/>
    <property type="match status" value="1"/>
</dbReference>
<dbReference type="CDD" id="cd04301">
    <property type="entry name" value="NAT_SF"/>
    <property type="match status" value="1"/>
</dbReference>
<dbReference type="FunFam" id="3.40.1160.10:FF:000005">
    <property type="entry name" value="Amino-acid acetyltransferase"/>
    <property type="match status" value="1"/>
</dbReference>
<dbReference type="FunFam" id="3.40.630.30:FF:000009">
    <property type="entry name" value="Amino-acid acetyltransferase"/>
    <property type="match status" value="1"/>
</dbReference>
<dbReference type="Gene3D" id="3.40.630.30">
    <property type="match status" value="1"/>
</dbReference>
<dbReference type="Gene3D" id="3.40.1160.10">
    <property type="entry name" value="Acetylglutamate kinase-like"/>
    <property type="match status" value="1"/>
</dbReference>
<dbReference type="HAMAP" id="MF_01105">
    <property type="entry name" value="N_acetyl_glu_synth"/>
    <property type="match status" value="1"/>
</dbReference>
<dbReference type="InterPro" id="IPR036393">
    <property type="entry name" value="AceGlu_kinase-like_sf"/>
</dbReference>
<dbReference type="InterPro" id="IPR016181">
    <property type="entry name" value="Acyl_CoA_acyltransferase"/>
</dbReference>
<dbReference type="InterPro" id="IPR001048">
    <property type="entry name" value="Asp/Glu/Uridylate_kinase"/>
</dbReference>
<dbReference type="InterPro" id="IPR000182">
    <property type="entry name" value="GNAT_dom"/>
</dbReference>
<dbReference type="InterPro" id="IPR033719">
    <property type="entry name" value="NAGS_kin"/>
</dbReference>
<dbReference type="InterPro" id="IPR010167">
    <property type="entry name" value="NH2A_AcTrfase"/>
</dbReference>
<dbReference type="NCBIfam" id="TIGR01890">
    <property type="entry name" value="N-Ac-Glu-synth"/>
    <property type="match status" value="1"/>
</dbReference>
<dbReference type="NCBIfam" id="NF003641">
    <property type="entry name" value="PRK05279.1"/>
    <property type="match status" value="1"/>
</dbReference>
<dbReference type="PANTHER" id="PTHR30602">
    <property type="entry name" value="AMINO-ACID ACETYLTRANSFERASE"/>
    <property type="match status" value="1"/>
</dbReference>
<dbReference type="PANTHER" id="PTHR30602:SF12">
    <property type="entry name" value="AMINO-ACID ACETYLTRANSFERASE NAGS1, CHLOROPLASTIC-RELATED"/>
    <property type="match status" value="1"/>
</dbReference>
<dbReference type="Pfam" id="PF00696">
    <property type="entry name" value="AA_kinase"/>
    <property type="match status" value="1"/>
</dbReference>
<dbReference type="Pfam" id="PF00583">
    <property type="entry name" value="Acetyltransf_1"/>
    <property type="match status" value="1"/>
</dbReference>
<dbReference type="PIRSF" id="PIRSF000423">
    <property type="entry name" value="ArgA"/>
    <property type="match status" value="1"/>
</dbReference>
<dbReference type="SUPFAM" id="SSF55729">
    <property type="entry name" value="Acyl-CoA N-acyltransferases (Nat)"/>
    <property type="match status" value="1"/>
</dbReference>
<dbReference type="SUPFAM" id="SSF53633">
    <property type="entry name" value="Carbamate kinase-like"/>
    <property type="match status" value="1"/>
</dbReference>
<dbReference type="PROSITE" id="PS51186">
    <property type="entry name" value="GNAT"/>
    <property type="match status" value="1"/>
</dbReference>
<name>ARGA_VIBCH</name>